<gene>
    <name evidence="1" type="primary">lsrF</name>
    <name type="ordered locus">EcHS_A1599</name>
</gene>
<reference key="1">
    <citation type="journal article" date="2008" name="J. Bacteriol.">
        <title>The pangenome structure of Escherichia coli: comparative genomic analysis of E. coli commensal and pathogenic isolates.</title>
        <authorList>
            <person name="Rasko D.A."/>
            <person name="Rosovitz M.J."/>
            <person name="Myers G.S.A."/>
            <person name="Mongodin E.F."/>
            <person name="Fricke W.F."/>
            <person name="Gajer P."/>
            <person name="Crabtree J."/>
            <person name="Sebaihia M."/>
            <person name="Thomson N.R."/>
            <person name="Chaudhuri R."/>
            <person name="Henderson I.R."/>
            <person name="Sperandio V."/>
            <person name="Ravel J."/>
        </authorList>
    </citation>
    <scope>NUCLEOTIDE SEQUENCE [LARGE SCALE GENOMIC DNA]</scope>
    <source>
        <strain>HS</strain>
    </source>
</reference>
<comment type="function">
    <text evidence="1">Involved in the degradation of phospho-AI-2, thereby terminating induction of the lsr operon and closing the AI-2 signaling cycle. Catalyzes the transfer of an acetyl moiety from 3-hydroxy-5-phosphonooxypentane-2,4-dione to CoA to form glycerone phosphate and acetyl-CoA.</text>
</comment>
<comment type="catalytic activity">
    <reaction evidence="1">
        <text>dihydroxyacetone phosphate + acetyl-CoA = 3-hydroxy-2,4-dioxopentyl phosphate + CoA</text>
        <dbReference type="Rhea" id="RHEA:44736"/>
        <dbReference type="ChEBI" id="CHEBI:57287"/>
        <dbReference type="ChEBI" id="CHEBI:57288"/>
        <dbReference type="ChEBI" id="CHEBI:57642"/>
        <dbReference type="ChEBI" id="CHEBI:84359"/>
        <dbReference type="EC" id="2.3.1.245"/>
    </reaction>
</comment>
<comment type="subunit">
    <text evidence="1">Homodecamer.</text>
</comment>
<comment type="subcellular location">
    <subcellularLocation>
        <location evidence="1">Cytoplasm</location>
    </subcellularLocation>
</comment>
<comment type="similarity">
    <text evidence="1">Belongs to the DeoC/FbaB aldolase family.</text>
</comment>
<keyword id="KW-0963">Cytoplasm</keyword>
<keyword id="KW-0704">Schiff base</keyword>
<keyword id="KW-0808">Transferase</keyword>
<proteinExistence type="inferred from homology"/>
<evidence type="ECO:0000255" key="1">
    <source>
        <dbReference type="HAMAP-Rule" id="MF_02052"/>
    </source>
</evidence>
<accession>A8A070</accession>
<sequence>MADLDDIKDGKDFRTDQPQQNIPFTLKGCGALDWGMQSRLSRIFNPKTGNTVMLAFDHGYFQGPTTGLERIDINIAPLFEHADVLMCTRGILRSVVPPATNKPVVLRASGANSILAELSNEAVALSMDDAVRLNSCAVAAQVYIGSEYEHQSIKNIIQLVDAGMKVGMPTMAVTGVGKDMVRDQRYFSLATRIAAEMGAQIIKTYYVEKGFERIVAGCPVPIVIAGGKKLPEREALEMCWQAIDQGASGVDMGRNIFQSDHPVAMMKAVQAVVHHNETADRAYELYLSEKQ</sequence>
<feature type="chain" id="PRO_0000351523" description="3-hydroxy-5-phosphonooxypentane-2,4-dione thiolase">
    <location>
        <begin position="1"/>
        <end position="291"/>
    </location>
</feature>
<feature type="active site" description="Schiff-base intermediate with substrate" evidence="1">
    <location>
        <position position="203"/>
    </location>
</feature>
<organism>
    <name type="scientific">Escherichia coli O9:H4 (strain HS)</name>
    <dbReference type="NCBI Taxonomy" id="331112"/>
    <lineage>
        <taxon>Bacteria</taxon>
        <taxon>Pseudomonadati</taxon>
        <taxon>Pseudomonadota</taxon>
        <taxon>Gammaproteobacteria</taxon>
        <taxon>Enterobacterales</taxon>
        <taxon>Enterobacteriaceae</taxon>
        <taxon>Escherichia</taxon>
    </lineage>
</organism>
<dbReference type="EC" id="2.3.1.245" evidence="1"/>
<dbReference type="EMBL" id="CP000802">
    <property type="protein sequence ID" value="ABV05924.1"/>
    <property type="molecule type" value="Genomic_DNA"/>
</dbReference>
<dbReference type="RefSeq" id="WP_000774189.1">
    <property type="nucleotide sequence ID" value="NC_009800.1"/>
</dbReference>
<dbReference type="SMR" id="A8A070"/>
<dbReference type="KEGG" id="ecx:EcHS_A1599"/>
<dbReference type="HOGENOM" id="CLU_057069_1_0_6"/>
<dbReference type="GO" id="GO:0005737">
    <property type="term" value="C:cytoplasm"/>
    <property type="evidence" value="ECO:0007669"/>
    <property type="project" value="UniProtKB-SubCell"/>
</dbReference>
<dbReference type="GO" id="GO:0016747">
    <property type="term" value="F:acyltransferase activity, transferring groups other than amino-acyl groups"/>
    <property type="evidence" value="ECO:0007669"/>
    <property type="project" value="UniProtKB-UniRule"/>
</dbReference>
<dbReference type="GO" id="GO:0004332">
    <property type="term" value="F:fructose-bisphosphate aldolase activity"/>
    <property type="evidence" value="ECO:0007669"/>
    <property type="project" value="InterPro"/>
</dbReference>
<dbReference type="CDD" id="cd00958">
    <property type="entry name" value="DhnA"/>
    <property type="match status" value="1"/>
</dbReference>
<dbReference type="FunFam" id="3.20.20.70:FF:000168">
    <property type="entry name" value="3-hydroxy-5-phosphonooxypentane-2,4-dione thiolase"/>
    <property type="match status" value="1"/>
</dbReference>
<dbReference type="Gene3D" id="3.20.20.70">
    <property type="entry name" value="Aldolase class I"/>
    <property type="match status" value="1"/>
</dbReference>
<dbReference type="HAMAP" id="MF_02052">
    <property type="entry name" value="LsrF"/>
    <property type="match status" value="1"/>
</dbReference>
<dbReference type="InterPro" id="IPR013785">
    <property type="entry name" value="Aldolase_TIM"/>
</dbReference>
<dbReference type="InterPro" id="IPR002915">
    <property type="entry name" value="DeoC/FbaB/LacD_aldolase"/>
</dbReference>
<dbReference type="InterPro" id="IPR050456">
    <property type="entry name" value="DeoC/FbaB_aldolase"/>
</dbReference>
<dbReference type="InterPro" id="IPR041720">
    <property type="entry name" value="FbaB-like"/>
</dbReference>
<dbReference type="InterPro" id="IPR033673">
    <property type="entry name" value="LsrF"/>
</dbReference>
<dbReference type="NCBIfam" id="NF006081">
    <property type="entry name" value="PRK08227.1"/>
    <property type="match status" value="1"/>
</dbReference>
<dbReference type="PANTHER" id="PTHR47916:SF1">
    <property type="entry name" value="3-HYDROXY-5-PHOSPHONOOXYPENTANE-2,4-DIONE THIOLASE"/>
    <property type="match status" value="1"/>
</dbReference>
<dbReference type="PANTHER" id="PTHR47916">
    <property type="entry name" value="FRUCTOSE-BISPHOSPHATE ALDOLASE CLASS 1"/>
    <property type="match status" value="1"/>
</dbReference>
<dbReference type="Pfam" id="PF01791">
    <property type="entry name" value="DeoC"/>
    <property type="match status" value="1"/>
</dbReference>
<dbReference type="PIRSF" id="PIRSF038992">
    <property type="entry name" value="Aldolase_Ia"/>
    <property type="match status" value="1"/>
</dbReference>
<dbReference type="SMART" id="SM01133">
    <property type="entry name" value="DeoC"/>
    <property type="match status" value="1"/>
</dbReference>
<dbReference type="SUPFAM" id="SSF51569">
    <property type="entry name" value="Aldolase"/>
    <property type="match status" value="1"/>
</dbReference>
<protein>
    <recommendedName>
        <fullName evidence="1">3-hydroxy-5-phosphonooxypentane-2,4-dione thiolase</fullName>
        <ecNumber evidence="1">2.3.1.245</ecNumber>
    </recommendedName>
</protein>
<name>LSRF_ECOHS</name>